<feature type="chain" id="PRO_0000159288" description="Methylamine utilization ferredoxin-type protein MauN">
    <location>
        <begin position="1"/>
        <end position="287"/>
    </location>
</feature>
<feature type="domain" description="4Fe-4S ferredoxin-type 1" evidence="2">
    <location>
        <begin position="218"/>
        <end position="248"/>
    </location>
</feature>
<feature type="domain" description="4Fe-4S ferredoxin-type 2" evidence="2">
    <location>
        <begin position="251"/>
        <end position="280"/>
    </location>
</feature>
<feature type="binding site" evidence="1">
    <location>
        <position position="227"/>
    </location>
    <ligand>
        <name>[4Fe-4S] cluster</name>
        <dbReference type="ChEBI" id="CHEBI:49883"/>
        <label>1</label>
    </ligand>
</feature>
<feature type="binding site" evidence="1">
    <location>
        <position position="230"/>
    </location>
    <ligand>
        <name>[4Fe-4S] cluster</name>
        <dbReference type="ChEBI" id="CHEBI:49883"/>
        <label>1</label>
    </ligand>
</feature>
<feature type="binding site" evidence="1">
    <location>
        <position position="233"/>
    </location>
    <ligand>
        <name>[4Fe-4S] cluster</name>
        <dbReference type="ChEBI" id="CHEBI:49883"/>
        <label>1</label>
    </ligand>
</feature>
<feature type="binding site" evidence="1">
    <location>
        <position position="237"/>
    </location>
    <ligand>
        <name>[4Fe-4S] cluster</name>
        <dbReference type="ChEBI" id="CHEBI:49883"/>
        <label>2</label>
    </ligand>
</feature>
<feature type="binding site" evidence="1">
    <location>
        <position position="260"/>
    </location>
    <ligand>
        <name>[4Fe-4S] cluster</name>
        <dbReference type="ChEBI" id="CHEBI:49883"/>
        <label>2</label>
    </ligand>
</feature>
<feature type="binding site" evidence="1">
    <location>
        <position position="263"/>
    </location>
    <ligand>
        <name>[4Fe-4S] cluster</name>
        <dbReference type="ChEBI" id="CHEBI:49883"/>
        <label>2</label>
    </ligand>
</feature>
<feature type="binding site" evidence="1">
    <location>
        <position position="266"/>
    </location>
    <ligand>
        <name>[4Fe-4S] cluster</name>
        <dbReference type="ChEBI" id="CHEBI:49883"/>
        <label>2</label>
    </ligand>
</feature>
<feature type="binding site" evidence="1">
    <location>
        <position position="270"/>
    </location>
    <ligand>
        <name>[4Fe-4S] cluster</name>
        <dbReference type="ChEBI" id="CHEBI:49883"/>
        <label>1</label>
    </ligand>
</feature>
<organism>
    <name type="scientific">Methylorubrum extorquens (strain ATCC 14718 / DSM 1338 / JCM 2805 / NCIMB 9133 / AM1)</name>
    <name type="common">Methylobacterium extorquens</name>
    <dbReference type="NCBI Taxonomy" id="272630"/>
    <lineage>
        <taxon>Bacteria</taxon>
        <taxon>Pseudomonadati</taxon>
        <taxon>Pseudomonadota</taxon>
        <taxon>Alphaproteobacteria</taxon>
        <taxon>Hyphomicrobiales</taxon>
        <taxon>Methylobacteriaceae</taxon>
        <taxon>Methylorubrum</taxon>
    </lineage>
</organism>
<evidence type="ECO:0000250" key="1"/>
<evidence type="ECO:0000255" key="2">
    <source>
        <dbReference type="PROSITE-ProRule" id="PRU00711"/>
    </source>
</evidence>
<evidence type="ECO:0000305" key="3"/>
<keyword id="KW-0004">4Fe-4S</keyword>
<keyword id="KW-0249">Electron transport</keyword>
<keyword id="KW-0408">Iron</keyword>
<keyword id="KW-0411">Iron-sulfur</keyword>
<keyword id="KW-0479">Metal-binding</keyword>
<keyword id="KW-1185">Reference proteome</keyword>
<keyword id="KW-0677">Repeat</keyword>
<keyword id="KW-0813">Transport</keyword>
<reference key="1">
    <citation type="journal article" date="1994" name="J. Bacteriol.">
        <title>Genetic organization of the mau gene cluster in Methylobacterium extorquens AM1: complete nucleotide sequence and generation and characteristics of mau mutants.</title>
        <authorList>
            <person name="Chistoserdov A.Y."/>
            <person name="Chistoserdova L.V."/>
            <person name="McIntire W.S."/>
            <person name="Lidstrom M.E."/>
        </authorList>
    </citation>
    <scope>NUCLEOTIDE SEQUENCE [GENOMIC DNA]</scope>
</reference>
<reference key="2">
    <citation type="journal article" date="2009" name="PLoS ONE">
        <title>Methylobacterium genome sequences: a reference blueprint to investigate microbial metabolism of C1 compounds from natural and industrial sources.</title>
        <authorList>
            <person name="Vuilleumier S."/>
            <person name="Chistoserdova L."/>
            <person name="Lee M.-C."/>
            <person name="Bringel F."/>
            <person name="Lajus A."/>
            <person name="Zhou Y."/>
            <person name="Gourion B."/>
            <person name="Barbe V."/>
            <person name="Chang J."/>
            <person name="Cruveiller S."/>
            <person name="Dossat C."/>
            <person name="Gillett W."/>
            <person name="Gruffaz C."/>
            <person name="Haugen E."/>
            <person name="Hourcade E."/>
            <person name="Levy R."/>
            <person name="Mangenot S."/>
            <person name="Muller E."/>
            <person name="Nadalig T."/>
            <person name="Pagni M."/>
            <person name="Penny C."/>
            <person name="Peyraud R."/>
            <person name="Robinson D.G."/>
            <person name="Roche D."/>
            <person name="Rouy Z."/>
            <person name="Saenampechek C."/>
            <person name="Salvignol G."/>
            <person name="Vallenet D."/>
            <person name="Wu Z."/>
            <person name="Marx C.J."/>
            <person name="Vorholt J.A."/>
            <person name="Olson M.V."/>
            <person name="Kaul R."/>
            <person name="Weissenbach J."/>
            <person name="Medigue C."/>
            <person name="Lidstrom M.E."/>
        </authorList>
    </citation>
    <scope>NUCLEOTIDE SEQUENCE [LARGE SCALE GENOMIC DNA]</scope>
    <source>
        <strain>ATCC 14718 / DSM 1338 / JCM 2805 / NCIMB 9133 / AM1</strain>
    </source>
</reference>
<dbReference type="EMBL" id="L26406">
    <property type="protein sequence ID" value="AAB46942.1"/>
    <property type="molecule type" value="Genomic_DNA"/>
</dbReference>
<dbReference type="EMBL" id="CP001510">
    <property type="protein sequence ID" value="ACS40537.1"/>
    <property type="molecule type" value="Genomic_DNA"/>
</dbReference>
<dbReference type="RefSeq" id="WP_012753052.1">
    <property type="nucleotide sequence ID" value="NC_012808.1"/>
</dbReference>
<dbReference type="STRING" id="272630.MexAM1_META1p2779"/>
<dbReference type="KEGG" id="mea:Mex_1p2779"/>
<dbReference type="eggNOG" id="COG0348">
    <property type="taxonomic scope" value="Bacteria"/>
</dbReference>
<dbReference type="HOGENOM" id="CLU_066585_1_0_5"/>
<dbReference type="OrthoDB" id="9806398at2"/>
<dbReference type="UniPathway" id="UPA00895"/>
<dbReference type="Proteomes" id="UP000009081">
    <property type="component" value="Chromosome"/>
</dbReference>
<dbReference type="GO" id="GO:0005886">
    <property type="term" value="C:plasma membrane"/>
    <property type="evidence" value="ECO:0007669"/>
    <property type="project" value="TreeGrafter"/>
</dbReference>
<dbReference type="GO" id="GO:0051539">
    <property type="term" value="F:4 iron, 4 sulfur cluster binding"/>
    <property type="evidence" value="ECO:0007669"/>
    <property type="project" value="UniProtKB-KW"/>
</dbReference>
<dbReference type="GO" id="GO:0046872">
    <property type="term" value="F:metal ion binding"/>
    <property type="evidence" value="ECO:0007669"/>
    <property type="project" value="UniProtKB-KW"/>
</dbReference>
<dbReference type="Gene3D" id="3.30.70.20">
    <property type="match status" value="1"/>
</dbReference>
<dbReference type="InterPro" id="IPR017896">
    <property type="entry name" value="4Fe4S_Fe-S-bd"/>
</dbReference>
<dbReference type="InterPro" id="IPR017900">
    <property type="entry name" value="4Fe4S_Fe_S_CS"/>
</dbReference>
<dbReference type="InterPro" id="IPR051684">
    <property type="entry name" value="Electron_Trans/Redox"/>
</dbReference>
<dbReference type="InterPro" id="IPR011886">
    <property type="entry name" value="NapH_MauN"/>
</dbReference>
<dbReference type="NCBIfam" id="TIGR02163">
    <property type="entry name" value="napH"/>
    <property type="match status" value="1"/>
</dbReference>
<dbReference type="NCBIfam" id="NF007013">
    <property type="entry name" value="PRK09477.1"/>
    <property type="match status" value="1"/>
</dbReference>
<dbReference type="PANTHER" id="PTHR30176">
    <property type="entry name" value="FERREDOXIN-TYPE PROTEIN NAPH"/>
    <property type="match status" value="1"/>
</dbReference>
<dbReference type="PANTHER" id="PTHR30176:SF3">
    <property type="entry name" value="FERREDOXIN-TYPE PROTEIN NAPH"/>
    <property type="match status" value="1"/>
</dbReference>
<dbReference type="Pfam" id="PF12801">
    <property type="entry name" value="Fer4_5"/>
    <property type="match status" value="2"/>
</dbReference>
<dbReference type="Pfam" id="PF12838">
    <property type="entry name" value="Fer4_7"/>
    <property type="match status" value="1"/>
</dbReference>
<dbReference type="SUPFAM" id="SSF54862">
    <property type="entry name" value="4Fe-4S ferredoxins"/>
    <property type="match status" value="1"/>
</dbReference>
<dbReference type="PROSITE" id="PS00198">
    <property type="entry name" value="4FE4S_FER_1"/>
    <property type="match status" value="1"/>
</dbReference>
<dbReference type="PROSITE" id="PS51379">
    <property type="entry name" value="4FE4S_FER_2"/>
    <property type="match status" value="2"/>
</dbReference>
<comment type="function">
    <text evidence="3">Involved in electron transfer.</text>
</comment>
<comment type="pathway">
    <text>One-carbon metabolism; methylamine degradation.</text>
</comment>
<accession>Q49131</accession>
<accession>C5ATL3</accession>
<name>MAUN_METEA</name>
<proteinExistence type="predicted"/>
<sequence>MRLSLIAAARAEGVAAKGLLRAHKWWSLRRLTQIMALGVFMAGPLAGVWLVRGNFASSEILGVLPLSDPFIALQSLMTGAVPAGVALLGAALIVLFYLVVGGRAYCGWICPVNIVTDTAYWLREKLGITRDRKLDRRTRLWVLAGALLASFLSGAIAWEFVNPVSLLQRGLIFGLGVGWTVIAAVFLLDLLVTRRGWCGHLCPVGAFYGIVGKTSLVRVAAARREGCTNCGACFQICTEPHVITPALKGTGSTLILSGDCVNCGSCIDACPVNVFEMTMRGRSISPH</sequence>
<gene>
    <name type="primary">mauN</name>
    <name type="ordered locus">MexAM1_META1p2779</name>
</gene>
<protein>
    <recommendedName>
        <fullName>Methylamine utilization ferredoxin-type protein MauN</fullName>
    </recommendedName>
</protein>